<comment type="function">
    <text evidence="1">The RuvA-RuvB-RuvC complex processes Holliday junction (HJ) DNA during genetic recombination and DNA repair, while the RuvA-RuvB complex plays an important role in the rescue of blocked DNA replication forks via replication fork reversal (RFR). RuvA specifically binds to HJ cruciform DNA, conferring on it an open structure. The RuvB hexamer acts as an ATP-dependent pump, pulling dsDNA into and through the RuvAB complex. RuvB forms 2 homohexamers on either side of HJ DNA bound by 1 or 2 RuvA tetramers; 4 subunits per hexamer contact DNA at a time. Coordinated motions by a converter formed by DNA-disengaged RuvB subunits stimulates ATP hydrolysis and nucleotide exchange. Immobilization of the converter enables RuvB to convert the ATP-contained energy into a lever motion, pulling 2 nucleotides of DNA out of the RuvA tetramer per ATP hydrolyzed, thus driving DNA branch migration. The RuvB motors rotate together with the DNA substrate, which together with the progressing nucleotide cycle form the mechanistic basis for DNA recombination by continuous HJ branch migration. Branch migration allows RuvC to scan DNA until it finds its consensus sequence, where it cleaves and resolves cruciform DNA.</text>
</comment>
<comment type="catalytic activity">
    <reaction evidence="1">
        <text>ATP + H2O = ADP + phosphate + H(+)</text>
        <dbReference type="Rhea" id="RHEA:13065"/>
        <dbReference type="ChEBI" id="CHEBI:15377"/>
        <dbReference type="ChEBI" id="CHEBI:15378"/>
        <dbReference type="ChEBI" id="CHEBI:30616"/>
        <dbReference type="ChEBI" id="CHEBI:43474"/>
        <dbReference type="ChEBI" id="CHEBI:456216"/>
    </reaction>
</comment>
<comment type="subunit">
    <text evidence="1">Homohexamer. Forms an RuvA(8)-RuvB(12)-Holliday junction (HJ) complex. HJ DNA is sandwiched between 2 RuvA tetramers; dsDNA enters through RuvA and exits via RuvB. An RuvB hexamer assembles on each DNA strand where it exits the tetramer. Each RuvB hexamer is contacted by two RuvA subunits (via domain III) on 2 adjacent RuvB subunits; this complex drives branch migration. In the full resolvosome a probable DNA-RuvA(4)-RuvB(12)-RuvC(2) complex forms which resolves the HJ.</text>
</comment>
<comment type="subcellular location">
    <subcellularLocation>
        <location evidence="1">Cytoplasm</location>
    </subcellularLocation>
</comment>
<comment type="domain">
    <text evidence="1">Has 3 domains, the large (RuvB-L) and small ATPase (RuvB-S) domains and the C-terminal head (RuvB-H) domain. The head domain binds DNA, while the ATPase domains jointly bind ATP, ADP or are empty depending on the state of the subunit in the translocation cycle. During a single DNA translocation step the structure of each domain remains the same, but their relative positions change.</text>
</comment>
<comment type="similarity">
    <text evidence="1">Belongs to the RuvB family.</text>
</comment>
<keyword id="KW-0067">ATP-binding</keyword>
<keyword id="KW-0963">Cytoplasm</keyword>
<keyword id="KW-0227">DNA damage</keyword>
<keyword id="KW-0233">DNA recombination</keyword>
<keyword id="KW-0234">DNA repair</keyword>
<keyword id="KW-0238">DNA-binding</keyword>
<keyword id="KW-0378">Hydrolase</keyword>
<keyword id="KW-0547">Nucleotide-binding</keyword>
<keyword id="KW-0742">SOS response</keyword>
<accession>B7MVZ1</accession>
<sequence>MIEADRLISAGTTLPEDVADRAIRPKLLEEYVGQPQVRSQMEIFIKAAKLRGDALDHLLIFGPPGLGKTTLANIVANEMGVNLRTTSGPVLEKAGDLAAMLTNLEPHDVLFIDEIHRLSPVVEEVLYPAMEDYQLDIMIGEGPAARSIKIDLPPFTLIGATTRAGSLTSPLRDRFGIVQRLEFYQVPDLQYIVSRSARFMGLEMSDDGALEVARRARGTPRIANRLLRRVRDFAEVKHDGTISADIAAQALDMLNVDAEGFDYMDRKLLLAVIDKFFGGPVGLDNLAAAIGEERETIEDVLEPYLIQQGFLQRTPRGRMATTRAWNHFGITPPEMP</sequence>
<organism>
    <name type="scientific">Escherichia coli O81 (strain ED1a)</name>
    <dbReference type="NCBI Taxonomy" id="585397"/>
    <lineage>
        <taxon>Bacteria</taxon>
        <taxon>Pseudomonadati</taxon>
        <taxon>Pseudomonadota</taxon>
        <taxon>Gammaproteobacteria</taxon>
        <taxon>Enterobacterales</taxon>
        <taxon>Enterobacteriaceae</taxon>
        <taxon>Escherichia</taxon>
    </lineage>
</organism>
<gene>
    <name evidence="1" type="primary">ruvB</name>
    <name type="ordered locus">ECED1_2065</name>
</gene>
<evidence type="ECO:0000255" key="1">
    <source>
        <dbReference type="HAMAP-Rule" id="MF_00016"/>
    </source>
</evidence>
<name>RUVB_ECO81</name>
<feature type="chain" id="PRO_1000116643" description="Holliday junction branch migration complex subunit RuvB">
    <location>
        <begin position="1"/>
        <end position="336"/>
    </location>
</feature>
<feature type="region of interest" description="Large ATPase domain (RuvB-L)" evidence="1">
    <location>
        <begin position="4"/>
        <end position="184"/>
    </location>
</feature>
<feature type="region of interest" description="Small ATPAse domain (RuvB-S)" evidence="1">
    <location>
        <begin position="185"/>
        <end position="255"/>
    </location>
</feature>
<feature type="region of interest" description="Head domain (RuvB-H)" evidence="1">
    <location>
        <begin position="258"/>
        <end position="336"/>
    </location>
</feature>
<feature type="binding site" evidence="1">
    <location>
        <position position="23"/>
    </location>
    <ligand>
        <name>ATP</name>
        <dbReference type="ChEBI" id="CHEBI:30616"/>
    </ligand>
</feature>
<feature type="binding site" evidence="1">
    <location>
        <position position="24"/>
    </location>
    <ligand>
        <name>ATP</name>
        <dbReference type="ChEBI" id="CHEBI:30616"/>
    </ligand>
</feature>
<feature type="binding site" evidence="1">
    <location>
        <position position="65"/>
    </location>
    <ligand>
        <name>ATP</name>
        <dbReference type="ChEBI" id="CHEBI:30616"/>
    </ligand>
</feature>
<feature type="binding site" evidence="1">
    <location>
        <position position="68"/>
    </location>
    <ligand>
        <name>ATP</name>
        <dbReference type="ChEBI" id="CHEBI:30616"/>
    </ligand>
</feature>
<feature type="binding site" evidence="1">
    <location>
        <position position="69"/>
    </location>
    <ligand>
        <name>ATP</name>
        <dbReference type="ChEBI" id="CHEBI:30616"/>
    </ligand>
</feature>
<feature type="binding site" evidence="1">
    <location>
        <position position="69"/>
    </location>
    <ligand>
        <name>Mg(2+)</name>
        <dbReference type="ChEBI" id="CHEBI:18420"/>
    </ligand>
</feature>
<feature type="binding site" evidence="1">
    <location>
        <position position="70"/>
    </location>
    <ligand>
        <name>ATP</name>
        <dbReference type="ChEBI" id="CHEBI:30616"/>
    </ligand>
</feature>
<feature type="binding site" evidence="1">
    <location>
        <begin position="131"/>
        <end position="133"/>
    </location>
    <ligand>
        <name>ATP</name>
        <dbReference type="ChEBI" id="CHEBI:30616"/>
    </ligand>
</feature>
<feature type="binding site" evidence="1">
    <location>
        <position position="174"/>
    </location>
    <ligand>
        <name>ATP</name>
        <dbReference type="ChEBI" id="CHEBI:30616"/>
    </ligand>
</feature>
<feature type="binding site" evidence="1">
    <location>
        <position position="184"/>
    </location>
    <ligand>
        <name>ATP</name>
        <dbReference type="ChEBI" id="CHEBI:30616"/>
    </ligand>
</feature>
<feature type="binding site" evidence="1">
    <location>
        <position position="221"/>
    </location>
    <ligand>
        <name>ATP</name>
        <dbReference type="ChEBI" id="CHEBI:30616"/>
    </ligand>
</feature>
<feature type="binding site" evidence="1">
    <location>
        <position position="294"/>
    </location>
    <ligand>
        <name>DNA</name>
        <dbReference type="ChEBI" id="CHEBI:16991"/>
    </ligand>
</feature>
<feature type="binding site" evidence="1">
    <location>
        <position position="313"/>
    </location>
    <ligand>
        <name>DNA</name>
        <dbReference type="ChEBI" id="CHEBI:16991"/>
    </ligand>
</feature>
<feature type="binding site" evidence="1">
    <location>
        <position position="318"/>
    </location>
    <ligand>
        <name>DNA</name>
        <dbReference type="ChEBI" id="CHEBI:16991"/>
    </ligand>
</feature>
<proteinExistence type="inferred from homology"/>
<dbReference type="EC" id="3.6.4.-" evidence="1"/>
<dbReference type="EMBL" id="CU928162">
    <property type="protein sequence ID" value="CAR08257.2"/>
    <property type="molecule type" value="Genomic_DNA"/>
</dbReference>
<dbReference type="RefSeq" id="WP_000568519.1">
    <property type="nucleotide sequence ID" value="NC_011745.1"/>
</dbReference>
<dbReference type="SMR" id="B7MVZ1"/>
<dbReference type="GeneID" id="75202735"/>
<dbReference type="KEGG" id="ecq:ECED1_2065"/>
<dbReference type="HOGENOM" id="CLU_055599_1_0_6"/>
<dbReference type="Proteomes" id="UP000000748">
    <property type="component" value="Chromosome"/>
</dbReference>
<dbReference type="GO" id="GO:0005737">
    <property type="term" value="C:cytoplasm"/>
    <property type="evidence" value="ECO:0007669"/>
    <property type="project" value="UniProtKB-SubCell"/>
</dbReference>
<dbReference type="GO" id="GO:0048476">
    <property type="term" value="C:Holliday junction resolvase complex"/>
    <property type="evidence" value="ECO:0007669"/>
    <property type="project" value="UniProtKB-UniRule"/>
</dbReference>
<dbReference type="GO" id="GO:0005524">
    <property type="term" value="F:ATP binding"/>
    <property type="evidence" value="ECO:0007669"/>
    <property type="project" value="UniProtKB-UniRule"/>
</dbReference>
<dbReference type="GO" id="GO:0016887">
    <property type="term" value="F:ATP hydrolysis activity"/>
    <property type="evidence" value="ECO:0007669"/>
    <property type="project" value="InterPro"/>
</dbReference>
<dbReference type="GO" id="GO:0000400">
    <property type="term" value="F:four-way junction DNA binding"/>
    <property type="evidence" value="ECO:0007669"/>
    <property type="project" value="UniProtKB-UniRule"/>
</dbReference>
<dbReference type="GO" id="GO:0009378">
    <property type="term" value="F:four-way junction helicase activity"/>
    <property type="evidence" value="ECO:0007669"/>
    <property type="project" value="InterPro"/>
</dbReference>
<dbReference type="GO" id="GO:0006310">
    <property type="term" value="P:DNA recombination"/>
    <property type="evidence" value="ECO:0007669"/>
    <property type="project" value="UniProtKB-UniRule"/>
</dbReference>
<dbReference type="GO" id="GO:0006281">
    <property type="term" value="P:DNA repair"/>
    <property type="evidence" value="ECO:0007669"/>
    <property type="project" value="UniProtKB-UniRule"/>
</dbReference>
<dbReference type="GO" id="GO:0009432">
    <property type="term" value="P:SOS response"/>
    <property type="evidence" value="ECO:0007669"/>
    <property type="project" value="UniProtKB-UniRule"/>
</dbReference>
<dbReference type="CDD" id="cd00009">
    <property type="entry name" value="AAA"/>
    <property type="match status" value="1"/>
</dbReference>
<dbReference type="FunFam" id="1.10.10.10:FF:000086">
    <property type="entry name" value="Holliday junction ATP-dependent DNA helicase RuvB"/>
    <property type="match status" value="1"/>
</dbReference>
<dbReference type="FunFam" id="1.10.8.60:FF:000023">
    <property type="entry name" value="Holliday junction ATP-dependent DNA helicase RuvB"/>
    <property type="match status" value="1"/>
</dbReference>
<dbReference type="FunFam" id="3.40.50.300:FF:000073">
    <property type="entry name" value="Holliday junction ATP-dependent DNA helicase RuvB"/>
    <property type="match status" value="1"/>
</dbReference>
<dbReference type="Gene3D" id="1.10.8.60">
    <property type="match status" value="1"/>
</dbReference>
<dbReference type="Gene3D" id="3.40.50.300">
    <property type="entry name" value="P-loop containing nucleotide triphosphate hydrolases"/>
    <property type="match status" value="1"/>
</dbReference>
<dbReference type="Gene3D" id="1.10.10.10">
    <property type="entry name" value="Winged helix-like DNA-binding domain superfamily/Winged helix DNA-binding domain"/>
    <property type="match status" value="1"/>
</dbReference>
<dbReference type="HAMAP" id="MF_00016">
    <property type="entry name" value="DNA_HJ_migration_RuvB"/>
    <property type="match status" value="1"/>
</dbReference>
<dbReference type="InterPro" id="IPR003593">
    <property type="entry name" value="AAA+_ATPase"/>
</dbReference>
<dbReference type="InterPro" id="IPR041445">
    <property type="entry name" value="AAA_lid_4"/>
</dbReference>
<dbReference type="InterPro" id="IPR004605">
    <property type="entry name" value="DNA_helicase_Holl-junc_RuvB"/>
</dbReference>
<dbReference type="InterPro" id="IPR027417">
    <property type="entry name" value="P-loop_NTPase"/>
</dbReference>
<dbReference type="InterPro" id="IPR008824">
    <property type="entry name" value="RuvB-like_N"/>
</dbReference>
<dbReference type="InterPro" id="IPR008823">
    <property type="entry name" value="RuvB_C"/>
</dbReference>
<dbReference type="InterPro" id="IPR036388">
    <property type="entry name" value="WH-like_DNA-bd_sf"/>
</dbReference>
<dbReference type="InterPro" id="IPR036390">
    <property type="entry name" value="WH_DNA-bd_sf"/>
</dbReference>
<dbReference type="NCBIfam" id="NF000868">
    <property type="entry name" value="PRK00080.1"/>
    <property type="match status" value="1"/>
</dbReference>
<dbReference type="NCBIfam" id="TIGR00635">
    <property type="entry name" value="ruvB"/>
    <property type="match status" value="1"/>
</dbReference>
<dbReference type="PANTHER" id="PTHR42848">
    <property type="match status" value="1"/>
</dbReference>
<dbReference type="PANTHER" id="PTHR42848:SF1">
    <property type="entry name" value="HOLLIDAY JUNCTION BRANCH MIGRATION COMPLEX SUBUNIT RUVB"/>
    <property type="match status" value="1"/>
</dbReference>
<dbReference type="Pfam" id="PF17864">
    <property type="entry name" value="AAA_lid_4"/>
    <property type="match status" value="1"/>
</dbReference>
<dbReference type="Pfam" id="PF05491">
    <property type="entry name" value="RuvB_C"/>
    <property type="match status" value="1"/>
</dbReference>
<dbReference type="Pfam" id="PF05496">
    <property type="entry name" value="RuvB_N"/>
    <property type="match status" value="1"/>
</dbReference>
<dbReference type="SMART" id="SM00382">
    <property type="entry name" value="AAA"/>
    <property type="match status" value="1"/>
</dbReference>
<dbReference type="SUPFAM" id="SSF52540">
    <property type="entry name" value="P-loop containing nucleoside triphosphate hydrolases"/>
    <property type="match status" value="1"/>
</dbReference>
<dbReference type="SUPFAM" id="SSF46785">
    <property type="entry name" value="Winged helix' DNA-binding domain"/>
    <property type="match status" value="1"/>
</dbReference>
<protein>
    <recommendedName>
        <fullName evidence="1">Holliday junction branch migration complex subunit RuvB</fullName>
        <ecNumber evidence="1">3.6.4.-</ecNumber>
    </recommendedName>
</protein>
<reference key="1">
    <citation type="journal article" date="2009" name="PLoS Genet.">
        <title>Organised genome dynamics in the Escherichia coli species results in highly diverse adaptive paths.</title>
        <authorList>
            <person name="Touchon M."/>
            <person name="Hoede C."/>
            <person name="Tenaillon O."/>
            <person name="Barbe V."/>
            <person name="Baeriswyl S."/>
            <person name="Bidet P."/>
            <person name="Bingen E."/>
            <person name="Bonacorsi S."/>
            <person name="Bouchier C."/>
            <person name="Bouvet O."/>
            <person name="Calteau A."/>
            <person name="Chiapello H."/>
            <person name="Clermont O."/>
            <person name="Cruveiller S."/>
            <person name="Danchin A."/>
            <person name="Diard M."/>
            <person name="Dossat C."/>
            <person name="Karoui M.E."/>
            <person name="Frapy E."/>
            <person name="Garry L."/>
            <person name="Ghigo J.M."/>
            <person name="Gilles A.M."/>
            <person name="Johnson J."/>
            <person name="Le Bouguenec C."/>
            <person name="Lescat M."/>
            <person name="Mangenot S."/>
            <person name="Martinez-Jehanne V."/>
            <person name="Matic I."/>
            <person name="Nassif X."/>
            <person name="Oztas S."/>
            <person name="Petit M.A."/>
            <person name="Pichon C."/>
            <person name="Rouy Z."/>
            <person name="Ruf C.S."/>
            <person name="Schneider D."/>
            <person name="Tourret J."/>
            <person name="Vacherie B."/>
            <person name="Vallenet D."/>
            <person name="Medigue C."/>
            <person name="Rocha E.P.C."/>
            <person name="Denamur E."/>
        </authorList>
    </citation>
    <scope>NUCLEOTIDE SEQUENCE [LARGE SCALE GENOMIC DNA]</scope>
    <source>
        <strain>ED1a</strain>
    </source>
</reference>